<comment type="function">
    <text evidence="2 3 4 8 11 12 13 14 15 16 18 19 21 23 24 26 27 29 31 32 34 36 38 40 41 43 45 58">A DNA-binding protein implicated in transcriptional repression (silencing) (PubMed:16963779, PubMed:17046956, PubMed:2128918, PubMed:23543115, PubMed:333393, PubMed:8890170, PubMed:8913298, PubMed:9398522). Also involved in bacterial chromosome organization and compaction (PubMed:10982869, PubMed:21903814, PubMed:6379600). H-NS binds tightly to AT-rich dsDNA and inhibits transcription (PubMed:16963779, PubMed:17435766, PubMed:17881364, PubMed:23543115, PubMed:2512122). Binds upstream and downstream of initiating RNA polymerase, trapping it in a loop and preventing transcription (PubMed:11714691). Binds to hundreds of sites, approximately half its binding sites are in non-coding DNA, which only accounts for about 10% of the genome (PubMed:16963779, PubMed:17046956, PubMed:23543115). Many of these loci were horizontally transferred (HTG); this offers the selective advantage of silencing foreign DNA while keeping it in the genome in case of need (PubMed:17046956, PubMed:17881364, PubMed:26789284). Suppresses transcription at many intragenic sites as well as transcription of spurious, non-coding RNAs genome-wide (PubMed:24449106). Repression of HTG by H-NS is thought to allow their DNA to evolve faster than non-H-NS-bound regions, and facilitates integration of HTG into transcriptional regulatory networks (PubMed:26789284). A subset of H-NS/StpA-regulated genes also require Hha (and/or Cnu, ydgT) for repression; Hha and Cnu increase the number of genes DNA bound by H-NS/StpA and may also modulate the oligomerization of the H-NS/StpA-complex (PubMed:23543115). The protein forms 2 clusters in the nucleoid which gather hns-bound loci together, bridging non-contiguous DNA, and causes DNA substantial condensation (PubMed:21903814). Binds DNA better at low temperatures than at 37 degrees Celsius; AT-rich sites nucleate H-NS binding, further DNA-binding is cooperative and this cooperativity decreases with rising temperature (PubMed:17435766, PubMed:17881364). Transcriptional repression can be inhibited by dominant-negative mutants of StpA or itself (PubMed:8755860). May affect transcriptional elongation (PubMed:25638302). Can increase translational efficiency of mRNA with suboptimal Shine-Dalgarno sequences (PubMed:20595230). Plays a role in the thermal control of pili and adhesive curli fimbriae production, by inducing transcription of csgD (PubMed:17010156). Plays a role in flagellar function (PubMed:11031114). Represses the CRISPR-cas promoters, permits only weak transcription of the crRNA precursor; its repression is antagonized by LeuO (PubMed:20132443, PubMed:20659289). Binds preferentially to the upstream region of its own gene recognizing two segments of DNA on both sides of a bend centered around -150 (PubMed:7934818). Overexpression suppresses secY24, a temperature-sensitive mutation (PubMed:1537791). Has also been reported to activate transcription of some genes (PubMed:2128918, PubMed:338303, PubMed:4566454).</text>
</comment>
<comment type="activity regulation">
    <text evidence="33">Hydroxyisobutyrylation on Lys-121 (K121hib) decreases the DNA-binding activity of H-NS, promotes the expression of acid-resistance genes and enhances bacterial survival under extreme acid stress.</text>
</comment>
<comment type="subunit">
    <text evidence="5 9 17 22 25 28 30 32 34 40 43 45 57">Homodimer, also found as tetramers or higher oligomers (PubMed:12460581, PubMed:23601147, PubMed:3135462, PubMed:338303, PubMed:4566454, PubMed:8755860, PubMed:8913298, PubMed:9398522). Oligomerizes into higher-order complexes that form bridges between adjacent DNA helices. The N-terminal region (residues 1-64) can interact with overexpressed StpA (PubMed:8755860). Forms a complex with Cnu (YdgT) (PubMed:21600204). The H-NS dimer forms a heterotrimeric complex with Hha in the absence of DNA; this is mediated by residues 1-46 (PubMed:11790731, PubMed:16650431, PubMed:21600204, PubMed:26085102). Interacts with Hfq (PubMed:2020545).</text>
</comment>
<comment type="interaction">
    <interactant intactId="EBI-544934">
        <id>P0ACF8</id>
    </interactant>
    <interactant intactId="EBI-551907">
        <id>P64467</id>
        <label>cnu</label>
    </interactant>
    <organismsDiffer>false</organismsDiffer>
    <experiments>3</experiments>
</comment>
<comment type="interaction">
    <interactant intactId="EBI-544934">
        <id>P0ACF8</id>
    </interactant>
    <interactant intactId="EBI-1122578">
        <id>P0ACE3</id>
        <label>hha</label>
    </interactant>
    <organismsDiffer>false</organismsDiffer>
    <experiments>5</experiments>
</comment>
<comment type="interaction">
    <interactant intactId="EBI-544934">
        <id>P0ACF8</id>
    </interactant>
    <interactant intactId="EBI-544934">
        <id>P0ACF8</id>
        <label>hns</label>
    </interactant>
    <organismsDiffer>false</organismsDiffer>
    <experiments>10</experiments>
</comment>
<comment type="interaction">
    <interactant intactId="EBI-544934">
        <id>P0ACF8</id>
    </interactant>
    <interactant intactId="EBI-551928">
        <id>P0ACG1</id>
        <label>stpA</label>
    </interactant>
    <organismsDiffer>false</organismsDiffer>
    <experiments>4</experiments>
</comment>
<comment type="subcellular location">
    <subcellularLocation>
        <location evidence="23 31">Cytoplasm</location>
        <location evidence="23 31">Nucleoid</location>
    </subcellularLocation>
    <text evidence="23">Forms 2 compact clusters per chromosome, located at one-quarter and three-quarter positions on the cell's long axis: 2 H-NS-repressed genes were closely associated with H-NS clusters while a non-H-NS-repressed gene was not substantially associated with the H-NS cluster (PubMed:21903814).</text>
</comment>
<comment type="induction">
    <text evidence="36 38 39 41 42">Protein levels rise from about 4,000/cell in exponential phase to about 18,000/cell in late stationary phase (at protein level) (PubMed:6379600). Subject to transcriptional auto-repression (PubMed:7934818). Induced by increased hydrostatic pressure (PubMed:8226663). hns transcription can be repressed by overexpressed StpA (which is usually repressed by hns) (PubMed:8890170). Induced by cold shock (42 to 15 degrees Celsius) (at protein level) (PubMed:8898389).</text>
</comment>
<comment type="domain">
    <text evidence="6 7 9 25 40 43 45">A central region (about residues 21-47) is involved in dimerization, but multimerization requires other residues (PubMed:12460581, PubMed:12592399, PubMed:16650431, PubMed:8755860, PubMed:9398522). The dimerization domain (1-47) also acts as a hinge; changes in its structure probably impact oligomerization and DNA-binding geometries (PubMed:23601147). The N-terminus also interacts with Hha, perhaps via residues 2-18; a well-folded dimer is not necessary for Hha binding (PubMed:16650431). The C-terminus (residues 92-137) binds DNA (PubMed:8913298). Residues in the N-terminus contribute to DNA-binding and to discrimination between curved and non-curved DNA (PubMed:12592399).</text>
</comment>
<comment type="PTM">
    <text evidence="33">2-hydroxyisobutyrylated by TmcA on Lys-121.</text>
</comment>
<comment type="PTM">
    <text evidence="36">Cells (strain MRE-600) in mid-exponential phase have three 15.5 kDa proteins with 3 different isoelectric points; the major form (H1a, pI 7.5) rises in concentration during growth while the 2 minor forms (H1b, pI about 7.2 and H1c, pI 7.0) remain approximately constant (PubMed:6379600).</text>
</comment>
<comment type="mass spectrometry">
    <text>A second experiment gave a mass of 15410.1.</text>
</comment>
<comment type="disruption phenotype">
    <text evidence="3 5 10 12 19 21 23 24 41 43">Decreased growth below 30 degrees Celsius (PubMed:1691451). Altered expression of a number of genes (PubMed:2128918, PubMed:23543115, PubMed:8890170, PubMed:8913298). Derepression of the cryptic blg operon (PubMed:11790731, PubMed:8913298). Alteration of chromosome organization (PubMed:21903814). Double hns-stpA mutants grow slower and have reduced viable cell counts compared to single hns mutants in MC1029 and MC4100 backgrounds (PubMed:8890170). In 0.3M NaCl a double hns-stpA deletion up-regulates 583 and down-regulates 86 genes, 363 of which are thought to have been horizontally acquired; 131 are also up-regulated in a double cnu-hha deletion (PubMed:23543115). At 28 degrees Celsius csgD transcription is reduced (PubMed:17010156). Flagella loss due to reduced expression of the flhDC operon (PubMed:11031114). Flagella can be restored by expression of flhDC, but strains are non-motile, suggesting H-NS also plays a role in flagellar function (PubMed:11031114). Disruption leads to increased expression of CRISPR-cas genes and increased viral resistance (PubMed:20659289).</text>
</comment>
<comment type="similarity">
    <text evidence="56">Belongs to the histone-like protein H-NS family.</text>
</comment>
<organism>
    <name type="scientific">Escherichia coli (strain K12)</name>
    <dbReference type="NCBI Taxonomy" id="83333"/>
    <lineage>
        <taxon>Bacteria</taxon>
        <taxon>Pseudomonadati</taxon>
        <taxon>Pseudomonadota</taxon>
        <taxon>Gammaproteobacteria</taxon>
        <taxon>Enterobacterales</taxon>
        <taxon>Enterobacteriaceae</taxon>
        <taxon>Escherichia</taxon>
    </lineage>
</organism>
<accession>P0ACF8</accession>
<accession>P08936</accession>
<accession>Q47267</accession>
<keyword id="KW-0002">3D-structure</keyword>
<keyword id="KW-0175">Coiled coil</keyword>
<keyword id="KW-0963">Cytoplasm</keyword>
<keyword id="KW-0903">Direct protein sequencing</keyword>
<keyword id="KW-0238">DNA-binding</keyword>
<keyword id="KW-0379">Hydroxylation</keyword>
<keyword id="KW-1185">Reference proteome</keyword>
<keyword id="KW-0678">Repressor</keyword>
<keyword id="KW-0694">RNA-binding</keyword>
<keyword id="KW-0346">Stress response</keyword>
<keyword id="KW-0804">Transcription</keyword>
<keyword id="KW-0805">Transcription regulation</keyword>
<keyword id="KW-0810">Translation regulation</keyword>
<protein>
    <recommendedName>
        <fullName evidence="52">DNA-binding protein H-NS</fullName>
    </recommendedName>
    <alternativeName>
        <fullName evidence="55">Heat-stable nucleoid-structuring protein</fullName>
    </alternativeName>
    <alternativeName>
        <fullName>Histone-like protein HLP-II</fullName>
    </alternativeName>
    <alternativeName>
        <fullName evidence="53">Protein B1</fullName>
    </alternativeName>
    <alternativeName>
        <fullName evidence="54">Protein H1</fullName>
    </alternativeName>
</protein>
<name>HNS_ECOLI</name>
<evidence type="ECO:0000250" key="1">
    <source>
        <dbReference type="UniProtKB" id="P0A1S2"/>
    </source>
</evidence>
<evidence type="ECO:0000269" key="2">
    <source>
    </source>
</evidence>
<evidence type="ECO:0000269" key="3">
    <source>
    </source>
</evidence>
<evidence type="ECO:0000269" key="4">
    <source>
    </source>
</evidence>
<evidence type="ECO:0000269" key="5">
    <source>
    </source>
</evidence>
<evidence type="ECO:0000269" key="6">
    <source>
    </source>
</evidence>
<evidence type="ECO:0000269" key="7">
    <source>
    </source>
</evidence>
<evidence type="ECO:0000269" key="8">
    <source>
    </source>
</evidence>
<evidence type="ECO:0000269" key="9">
    <source>
    </source>
</evidence>
<evidence type="ECO:0000269" key="10">
    <source>
    </source>
</evidence>
<evidence type="ECO:0000269" key="11">
    <source>
    </source>
</evidence>
<evidence type="ECO:0000269" key="12">
    <source>
    </source>
</evidence>
<evidence type="ECO:0000269" key="13">
    <source>
    </source>
</evidence>
<evidence type="ECO:0000269" key="14">
    <source>
    </source>
</evidence>
<evidence type="ECO:0000269" key="15">
    <source>
    </source>
</evidence>
<evidence type="ECO:0000269" key="16">
    <source>
    </source>
</evidence>
<evidence type="ECO:0000269" key="17">
    <source>
    </source>
</evidence>
<evidence type="ECO:0000269" key="18">
    <source>
    </source>
</evidence>
<evidence type="ECO:0000269" key="19">
    <source>
    </source>
</evidence>
<evidence type="ECO:0000269" key="20">
    <source>
    </source>
</evidence>
<evidence type="ECO:0000269" key="21">
    <source>
    </source>
</evidence>
<evidence type="ECO:0000269" key="22">
    <source>
    </source>
</evidence>
<evidence type="ECO:0000269" key="23">
    <source>
    </source>
</evidence>
<evidence type="ECO:0000269" key="24">
    <source>
    </source>
</evidence>
<evidence type="ECO:0000269" key="25">
    <source>
    </source>
</evidence>
<evidence type="ECO:0000269" key="26">
    <source>
    </source>
</evidence>
<evidence type="ECO:0000269" key="27">
    <source>
    </source>
</evidence>
<evidence type="ECO:0000269" key="28">
    <source>
    </source>
</evidence>
<evidence type="ECO:0000269" key="29">
    <source>
    </source>
</evidence>
<evidence type="ECO:0000269" key="30">
    <source>
    </source>
</evidence>
<evidence type="ECO:0000269" key="31">
    <source>
    </source>
</evidence>
<evidence type="ECO:0000269" key="32">
    <source>
    </source>
</evidence>
<evidence type="ECO:0000269" key="33">
    <source>
    </source>
</evidence>
<evidence type="ECO:0000269" key="34">
    <source>
    </source>
</evidence>
<evidence type="ECO:0000269" key="35">
    <source>
    </source>
</evidence>
<evidence type="ECO:0000269" key="36">
    <source>
    </source>
</evidence>
<evidence type="ECO:0000269" key="37">
    <source>
    </source>
</evidence>
<evidence type="ECO:0000269" key="38">
    <source>
    </source>
</evidence>
<evidence type="ECO:0000269" key="39">
    <source>
    </source>
</evidence>
<evidence type="ECO:0000269" key="40">
    <source>
    </source>
</evidence>
<evidence type="ECO:0000269" key="41">
    <source>
    </source>
</evidence>
<evidence type="ECO:0000269" key="42">
    <source>
    </source>
</evidence>
<evidence type="ECO:0000269" key="43">
    <source>
    </source>
</evidence>
<evidence type="ECO:0000269" key="44">
    <source>
    </source>
</evidence>
<evidence type="ECO:0000269" key="45">
    <source>
    </source>
</evidence>
<evidence type="ECO:0000269" key="46">
    <source>
    </source>
</evidence>
<evidence type="ECO:0000269" key="47">
    <source>
    </source>
</evidence>
<evidence type="ECO:0000269" key="48">
    <source ref="16"/>
</evidence>
<evidence type="ECO:0000303" key="49">
    <source>
    </source>
</evidence>
<evidence type="ECO:0000303" key="50">
    <source>
    </source>
</evidence>
<evidence type="ECO:0000303" key="51">
    <source>
    </source>
</evidence>
<evidence type="ECO:0000303" key="52">
    <source>
    </source>
</evidence>
<evidence type="ECO:0000303" key="53">
    <source>
    </source>
</evidence>
<evidence type="ECO:0000303" key="54">
    <source>
    </source>
</evidence>
<evidence type="ECO:0000303" key="55">
    <source>
    </source>
</evidence>
<evidence type="ECO:0000305" key="56"/>
<evidence type="ECO:0000305" key="57">
    <source>
    </source>
</evidence>
<evidence type="ECO:0000305" key="58">
    <source>
    </source>
</evidence>
<evidence type="ECO:0007829" key="59">
    <source>
        <dbReference type="PDB" id="1HNR"/>
    </source>
</evidence>
<evidence type="ECO:0007829" key="60">
    <source>
        <dbReference type="PDB" id="1HNS"/>
    </source>
</evidence>
<evidence type="ECO:0007829" key="61">
    <source>
        <dbReference type="PDB" id="1LR1"/>
    </source>
</evidence>
<feature type="initiator methionine" description="Removed" evidence="5 17 20 35 37 44 46 47 48">
    <location>
        <position position="1"/>
    </location>
</feature>
<feature type="chain" id="PRO_0000168503" description="DNA-binding protein H-NS">
    <location>
        <begin position="2"/>
        <end position="137"/>
    </location>
</feature>
<feature type="DNA-binding region" evidence="1">
    <location>
        <begin position="112"/>
        <end position="117"/>
    </location>
</feature>
<feature type="region of interest" description="Involved in dimerization" evidence="45">
    <location>
        <begin position="21"/>
        <end position="63"/>
    </location>
</feature>
<feature type="region of interest" description="Required for DNA-binding" evidence="43">
    <location>
        <begin position="92"/>
        <end position="137"/>
    </location>
</feature>
<feature type="coiled-coil region" evidence="6 7">
    <location>
        <begin position="22"/>
        <end position="49"/>
    </location>
</feature>
<feature type="site" description="Interacts with Hha" evidence="22">
    <location>
        <position position="12"/>
    </location>
</feature>
<feature type="modified residue" description="N6-(2-hydroxyisobutyryl)lysine" evidence="33">
    <location>
        <position position="121"/>
    </location>
</feature>
<feature type="mutagenesis site" description="No longer complements a deletion mutant, has no dominant-negative effects on wild-type protein, does not oligomerize." evidence="45">
    <location>
        <begin position="2"/>
        <end position="69"/>
    </location>
</feature>
<feature type="mutagenesis site" description="No longer complements a deletion mutant, has dominant-negative effects on wild-type protein, oligomerizes." evidence="45">
    <location>
        <begin position="2"/>
        <end position="20"/>
    </location>
</feature>
<feature type="mutagenesis site" description="No effect on oligomerization of N-terminal fragment 1-89." evidence="6">
    <original>K</original>
    <variation>P</variation>
    <location>
        <position position="6"/>
    </location>
</feature>
<feature type="mutagenesis site" description="Decreased DNA-binding, loss of preference for curved DNA." evidence="7">
    <original>RTLR</original>
    <variation>ERLA</variation>
    <location>
        <begin position="12"/>
        <end position="15"/>
    </location>
</feature>
<feature type="mutagenesis site" description="Derepression of proV and bgl expression, normal DNA-binding, normal oligomerization." evidence="43">
    <original>R</original>
    <variation>C</variation>
    <location>
        <position position="12"/>
    </location>
</feature>
<feature type="mutagenesis site" description="Derepression of proV and bgl expression, normal DNA-binding, normal oligomerization. Fragments 1-46 and 1-64 no longer bind Hha." evidence="9 43">
    <original>R</original>
    <variation>H</variation>
    <location>
        <position position="12"/>
    </location>
</feature>
<feature type="mutagenesis site" description="Abolishes the interaction with Hha." evidence="22">
    <original>R</original>
    <variation>K</variation>
    <location>
        <position position="12"/>
    </location>
</feature>
<feature type="mutagenesis site" description="Derepression of proV and bgl expression." evidence="43">
    <original>R</original>
    <variation>C</variation>
    <location>
        <position position="15"/>
    </location>
</feature>
<feature type="mutagenesis site" description="Derepression of proV and bgl expression. Fragments 1-46 and 1-64 fold incorrectly but still bind Hha." evidence="9 43">
    <original>R</original>
    <variation>H</variation>
    <location>
        <position position="15"/>
    </location>
</feature>
<feature type="mutagenesis site" description="Abolishes oligomerization of N-terminal fragment 1-89." evidence="6">
    <original>Q</original>
    <variation>P</variation>
    <location>
        <position position="17"/>
    </location>
</feature>
<feature type="mutagenesis site" description="Partial loss of repressor function." evidence="40">
    <original>L</original>
    <variation>P</variation>
    <location>
        <position position="26"/>
    </location>
</feature>
<feature type="mutagenesis site" description="Wild-type function." evidence="45">
    <original>L</original>
    <variation>A</variation>
    <variation>K</variation>
    <location>
        <position position="30"/>
    </location>
</feature>
<feature type="mutagenesis site" description="Derepression of proV and partial derepression of bgl expression, does not dimerize, anomalous protein mobility on gels." evidence="45">
    <original>L</original>
    <variation>D</variation>
    <location>
        <position position="30"/>
    </location>
</feature>
<feature type="mutagenesis site" description="Derepression of proV and bgl expression, does not dimerize, anomalous protein mobility on gels. Protein localizes to nucleoid but no longer forms discreet compact clusters." evidence="23 45">
    <original>L</original>
    <variation>P</variation>
    <location>
        <position position="30"/>
    </location>
</feature>
<feature type="mutagenesis site" description="Loss of Hha binding by fragment 1-64, protein folding is unaffected." evidence="28">
    <original>K</original>
    <variation>Q</variation>
    <location>
        <position position="32"/>
    </location>
</feature>
<feature type="mutagenesis site" description="Partial loss of repressor function." evidence="40">
    <original>ERT</original>
    <variation>GRP</variation>
    <location>
        <begin position="53"/>
        <end position="55"/>
    </location>
</feature>
<feature type="mutagenesis site" description="Derepression of proV and bgl expression." evidence="43">
    <original>R</original>
    <variation>C</variation>
    <location>
        <position position="54"/>
    </location>
</feature>
<feature type="mutagenesis site" description="No longer complements a deletion mutant, has dominant-negative effects on wild-type protein, oligomerizes." evidence="40 45">
    <location>
        <begin position="64"/>
        <end position="137"/>
    </location>
</feature>
<feature type="mutagenesis site" description="Derepression of proV expression." evidence="43">
    <original>R</original>
    <variation>C</variation>
    <variation>H</variation>
    <location>
        <position position="90"/>
    </location>
</feature>
<feature type="mutagenesis site" description="Derepression of proV expression." evidence="43">
    <original>A</original>
    <variation>T</variation>
    <location>
        <position position="91"/>
    </location>
</feature>
<feature type="mutagenesis site" description="Derepression of proV expression, loss of DNA-binding, increased oligomerization. No longer complements a deletion mutant, has dominant-negative effects on wild-type protein, oligomerizes." evidence="43 45">
    <location>
        <begin position="92"/>
        <end position="137"/>
    </location>
</feature>
<feature type="mutagenesis site" description="Derepression of proV expression." evidence="43">
    <original>R</original>
    <variation>C</variation>
    <location>
        <position position="93"/>
    </location>
</feature>
<feature type="mutagenesis site" description="Derepression of proV expression." evidence="43">
    <original>P</original>
    <variation>L</variation>
    <variation>S</variation>
    <location>
        <position position="94"/>
    </location>
</feature>
<feature type="mutagenesis site" description="Derepression of proV expression." evidence="43">
    <original>A</original>
    <variation>T</variation>
    <location>
        <position position="95"/>
    </location>
</feature>
<feature type="mutagenesis site" description="Does not affect hydroxyisobutyrylation." evidence="33">
    <original>K</original>
    <variation>Q</variation>
    <location>
        <position position="96"/>
    </location>
</feature>
<feature type="mutagenesis site" description="Partial loss of repressor function." evidence="40">
    <original>Y</original>
    <variation>C</variation>
    <variation>H</variation>
    <variation>S</variation>
    <location>
        <position position="97"/>
    </location>
</feature>
<feature type="mutagenesis site" description="Partial loss of repressor function." evidence="40">
    <original>T</original>
    <variation>A</variation>
    <location>
        <position position="110"/>
    </location>
</feature>
<feature type="mutagenesis site" description="Derepression of proV expression." evidence="43">
    <original>T</original>
    <variation>I</variation>
    <location>
        <position position="110"/>
    </location>
</feature>
<feature type="mutagenesis site" description="Derepression of proV expression." evidence="43">
    <original>G</original>
    <variation>D</variation>
    <variation>S</variation>
    <location>
        <position position="111"/>
    </location>
</feature>
<feature type="mutagenesis site" description="Derepression of proV expression, decreased DNA-binding but still prefers curved DNA, increased oligomerization." evidence="43">
    <original>G</original>
    <variation>D</variation>
    <location>
        <position position="113"/>
    </location>
</feature>
<feature type="mutagenesis site" description="Partial loss of repressor function." evidence="40">
    <original>G</original>
    <variation>S</variation>
    <location>
        <position position="113"/>
    </location>
</feature>
<feature type="mutagenesis site" description="Derepression of proV expression." evidence="43">
    <original>R</original>
    <variation>C</variation>
    <variation>H</variation>
    <location>
        <position position="114"/>
    </location>
</feature>
<feature type="mutagenesis site" description="Derepression of proV expression." evidence="43">
    <original>T</original>
    <variation>I</variation>
    <location>
        <position position="115"/>
    </location>
</feature>
<feature type="mutagenesis site" description="Partial loss of repressor function. Protein localizes to nucleoid but forms about 20-fold fewer localization points." evidence="23 40">
    <original>P</original>
    <variation>S</variation>
    <location>
        <position position="116"/>
    </location>
</feature>
<feature type="mutagenesis site" description="Partial loss of repressor function." evidence="40">
    <original>I</original>
    <variation>T</variation>
    <location>
        <position position="119"/>
    </location>
</feature>
<feature type="mutagenesis site" description="No change in hydroxyisobutyrylation levels. Almost loss of DNA-binding activity." evidence="33">
    <original>K</original>
    <variation>Q</variation>
    <location>
        <position position="121"/>
    </location>
</feature>
<feature type="mutagenesis site" description="Does not affect DNA-binding activity." evidence="33">
    <original>K</original>
    <variation>R</variation>
    <location>
        <position position="121"/>
    </location>
</feature>
<feature type="mutagenesis site" description="Partial loss of repressor function." evidence="40">
    <original>AMDEQGKSLDDFLIKQ</original>
    <variation>KQWMRKVNPSTIS</variation>
    <location>
        <begin position="122"/>
        <end position="137"/>
    </location>
</feature>
<feature type="mutagenesis site" description="Partial loss of repressor function." evidence="40">
    <original>F</original>
    <variation>S</variation>
    <location>
        <position position="133"/>
    </location>
</feature>
<feature type="helix" evidence="61">
    <location>
        <begin position="3"/>
        <end position="7"/>
    </location>
</feature>
<feature type="helix" evidence="61">
    <location>
        <begin position="10"/>
        <end position="17"/>
    </location>
</feature>
<feature type="turn" evidence="61">
    <location>
        <begin position="18"/>
        <end position="20"/>
    </location>
</feature>
<feature type="helix" evidence="61">
    <location>
        <begin position="24"/>
        <end position="51"/>
    </location>
</feature>
<feature type="strand" evidence="59">
    <location>
        <begin position="97"/>
        <end position="99"/>
    </location>
</feature>
<feature type="strand" evidence="60">
    <location>
        <begin position="100"/>
        <end position="106"/>
    </location>
</feature>
<feature type="turn" evidence="60">
    <location>
        <begin position="110"/>
        <end position="113"/>
    </location>
</feature>
<feature type="strand" evidence="60">
    <location>
        <begin position="115"/>
        <end position="117"/>
    </location>
</feature>
<feature type="helix" evidence="59">
    <location>
        <begin position="118"/>
        <end position="125"/>
    </location>
</feature>
<feature type="helix" evidence="59">
    <location>
        <begin position="130"/>
        <end position="132"/>
    </location>
</feature>
<sequence>MSEALKILNNIRTLRAQARECTLETLEEMLEKLEVVVNERREEESAAAAEVEERTRKLQQYREMLIADGIDPNELLNSLAAVKSGTKAKRAQRPAKYSYVDENGETKTWTGQGRTPAVIKKAMDEQGKSLDDFLIKQ</sequence>
<reference key="1">
    <citation type="journal article" date="1988" name="Mol. Gen. Genet.">
        <title>Identification, cloning, nucleotide sequence and chromosomal map location of hns, the structural gene for Escherichia coli DNA-binding protein H-NS.</title>
        <authorList>
            <person name="Pon C.L."/>
            <person name="Calogero R.A."/>
            <person name="Gualerzi C.O."/>
        </authorList>
    </citation>
    <scope>NUCLEOTIDE SEQUENCE [GENOMIC DNA]</scope>
    <source>
        <strain>K12</strain>
    </source>
</reference>
<reference key="2">
    <citation type="journal article" date="1988" name="Mol. Microbiol.">
        <title>Proteins from the prokaryotic nucleoid: primary and quaternary structure of the 15-kD Escherichia coli DNA binding protein H-NS.</title>
        <authorList>
            <person name="Falconi M."/>
            <person name="Gualtieri M.T."/>
            <person name="la Teana A."/>
            <person name="Losso M.A."/>
            <person name="Pon C.L."/>
        </authorList>
    </citation>
    <scope>NUCLEOTIDE SEQUENCE [GENOMIC DNA]</scope>
    <scope>SUBUNIT</scope>
</reference>
<reference key="3">
    <citation type="journal article" date="1990" name="Nature">
        <title>Transcriptional silencing and thermoregulation of gene expression in Escherichia coli.</title>
        <authorList>
            <person name="Goeransson M."/>
            <person name="Sonden B."/>
            <person name="Nilsson P."/>
            <person name="Dagberg B."/>
            <person name="Forsman K."/>
            <person name="Emanuelsson K."/>
            <person name="Uhlin B.E."/>
        </authorList>
    </citation>
    <scope>NUCLEOTIDE SEQUENCE [GENOMIC DNA]</scope>
    <scope>DISRUPTION PHENOTYPE</scope>
</reference>
<reference key="4">
    <citation type="journal article" date="1992" name="J. Bacteriol.">
        <title>Multicopy suppression: an approach to understanding intracellular functioning of the protein export system.</title>
        <authorList>
            <person name="Ueguchi C."/>
            <person name="Ito K."/>
        </authorList>
    </citation>
    <scope>NUCLEOTIDE SEQUENCE [GENOMIC DNA]</scope>
    <scope>FUNCTION</scope>
    <source>
        <strain>K12</strain>
    </source>
</reference>
<reference key="5">
    <citation type="journal article" date="1990" name="Mol. Gen. Genet.">
        <title>The osmZ (bglY) gene encodes the DNA-binding protein H-NS (H1a), a component of the Escherichia coli K12 nucleoid.</title>
        <authorList>
            <person name="May G."/>
            <person name="Dersch P."/>
            <person name="Haardt M."/>
            <person name="Middendorf A."/>
            <person name="Bremer E."/>
        </authorList>
    </citation>
    <scope>NUCLEOTIDE SEQUENCE [GENOMIC DNA]</scope>
    <source>
        <strain>K12 / MC4100</strain>
    </source>
</reference>
<reference key="6">
    <citation type="journal article" date="1996" name="DNA Res.">
        <title>A 718-kb DNA sequence of the Escherichia coli K-12 genome corresponding to the 12.7-28.0 min region on the linkage map.</title>
        <authorList>
            <person name="Oshima T."/>
            <person name="Aiba H."/>
            <person name="Baba T."/>
            <person name="Fujita K."/>
            <person name="Hayashi K."/>
            <person name="Honjo A."/>
            <person name="Ikemoto K."/>
            <person name="Inada T."/>
            <person name="Itoh T."/>
            <person name="Kajihara M."/>
            <person name="Kanai K."/>
            <person name="Kashimoto K."/>
            <person name="Kimura S."/>
            <person name="Kitagawa M."/>
            <person name="Makino K."/>
            <person name="Masuda S."/>
            <person name="Miki T."/>
            <person name="Mizobuchi K."/>
            <person name="Mori H."/>
            <person name="Motomura K."/>
            <person name="Nakamura Y."/>
            <person name="Nashimoto H."/>
            <person name="Nishio Y."/>
            <person name="Saito N."/>
            <person name="Sampei G."/>
            <person name="Seki Y."/>
            <person name="Tagami H."/>
            <person name="Takemoto K."/>
            <person name="Wada C."/>
            <person name="Yamamoto Y."/>
            <person name="Yano M."/>
            <person name="Horiuchi T."/>
        </authorList>
    </citation>
    <scope>NUCLEOTIDE SEQUENCE [LARGE SCALE GENOMIC DNA]</scope>
    <source>
        <strain>K12 / W3110 / ATCC 27325 / DSM 5911</strain>
    </source>
</reference>
<reference key="7">
    <citation type="journal article" date="1997" name="Science">
        <title>The complete genome sequence of Escherichia coli K-12.</title>
        <authorList>
            <person name="Blattner F.R."/>
            <person name="Plunkett G. III"/>
            <person name="Bloch C.A."/>
            <person name="Perna N.T."/>
            <person name="Burland V."/>
            <person name="Riley M."/>
            <person name="Collado-Vides J."/>
            <person name="Glasner J.D."/>
            <person name="Rode C.K."/>
            <person name="Mayhew G.F."/>
            <person name="Gregor J."/>
            <person name="Davis N.W."/>
            <person name="Kirkpatrick H.A."/>
            <person name="Goeden M.A."/>
            <person name="Rose D.J."/>
            <person name="Mau B."/>
            <person name="Shao Y."/>
        </authorList>
    </citation>
    <scope>NUCLEOTIDE SEQUENCE [LARGE SCALE GENOMIC DNA]</scope>
    <source>
        <strain>K12 / MG1655 / ATCC 47076</strain>
    </source>
</reference>
<reference key="8">
    <citation type="journal article" date="2006" name="Mol. Syst. Biol.">
        <title>Highly accurate genome sequences of Escherichia coli K-12 strains MG1655 and W3110.</title>
        <authorList>
            <person name="Hayashi K."/>
            <person name="Morooka N."/>
            <person name="Yamamoto Y."/>
            <person name="Fujita K."/>
            <person name="Isono K."/>
            <person name="Choi S."/>
            <person name="Ohtsubo E."/>
            <person name="Baba T."/>
            <person name="Wanner B.L."/>
            <person name="Mori H."/>
            <person name="Horiuchi T."/>
        </authorList>
    </citation>
    <scope>NUCLEOTIDE SEQUENCE [LARGE SCALE GENOMIC DNA]</scope>
    <source>
        <strain>K12 / W3110 / ATCC 27325 / DSM 5911</strain>
    </source>
</reference>
<reference key="9">
    <citation type="journal article" date="1995" name="Microbiology">
        <title>Filling the gap between hns and adhE in Escherichia coli K12.</title>
        <authorList>
            <person name="Danchin A."/>
            <person name="Krin E."/>
        </authorList>
    </citation>
    <scope>NUCLEOTIDE SEQUENCE [GENOMIC DNA] OF 1-135</scope>
    <source>
        <strain>K12</strain>
    </source>
</reference>
<reference key="10">
    <citation type="journal article" date="1989" name="FEBS Lett.">
        <title>Characterization of the structural genes for the DNA-binding protein H-NS in Enterobacteriaceae.</title>
        <authorList>
            <person name="la Teana A."/>
            <person name="Falconi M."/>
            <person name="Scarlato V."/>
            <person name="Lammi M."/>
            <person name="Pon C.L."/>
        </authorList>
    </citation>
    <scope>NUCLEOTIDE SEQUENCE [GENOMIC DNA] OF 1-31</scope>
</reference>
<reference key="11">
    <citation type="journal article" date="1991" name="Nucleic Acids Res.">
        <title>Identification and sequence determination of the host factor gene for bacteriophage Q beta.</title>
        <authorList>
            <person name="Kajitani M."/>
            <person name="Ishihama A."/>
        </authorList>
    </citation>
    <scope>PROTEIN SEQUENCE OF 2-27</scope>
    <scope>SUBUNIT</scope>
    <source>
        <strain>P4X8 / ME7784</strain>
    </source>
</reference>
<reference key="12">
    <citation type="journal article" date="1984" name="Biochem. Biophys. Res. Commun.">
        <title>A DNA-binding protein from E. coli isolation, characterization and its relationship with proteins H1 and B1.</title>
        <authorList>
            <person name="Laine B."/>
            <person name="Sautiere P."/>
            <person name="Spassky A."/>
            <person name="Rimsky S."/>
        </authorList>
    </citation>
    <scope>PROTEIN SEQUENCE OF 2-21</scope>
    <scope>DNA-BINDING</scope>
    <source>
        <strain>MRE-600</strain>
    </source>
</reference>
<reference key="13">
    <citation type="journal article" date="1990" name="J. Biochem.">
        <title>An Escherichia coli protein that preferentially binds to sharply curved DNA.</title>
        <authorList>
            <person name="Yamada H."/>
            <person name="Muramatsu S."/>
            <person name="Mizuno T."/>
        </authorList>
    </citation>
    <scope>PROTEIN SEQUENCE OF 2-20</scope>
    <scope>DNA-BINDING</scope>
</reference>
<reference key="14">
    <citation type="journal article" date="1998" name="FEMS Microbiol. Lett.">
        <title>Small genes/gene-products in Escherichia coli K-12.</title>
        <authorList>
            <person name="Wasinger V.C."/>
            <person name="Humphery-Smith I."/>
        </authorList>
    </citation>
    <scope>PROTEIN SEQUENCE OF 2-20</scope>
    <source>
        <strain>K12</strain>
    </source>
</reference>
<reference key="15">
    <citation type="journal article" date="1997" name="Electrophoresis">
        <title>Comparing the predicted and observed properties of proteins encoded in the genome of Escherichia coli K-12.</title>
        <authorList>
            <person name="Link A.J."/>
            <person name="Robison K."/>
            <person name="Church G.M."/>
        </authorList>
    </citation>
    <scope>PROTEIN SEQUENCE OF 2-13</scope>
    <source>
        <strain>K12 / EMG2</strain>
    </source>
</reference>
<reference key="16">
    <citation type="submission" date="1994-09" db="UniProtKB">
        <authorList>
            <person name="Pasquali C."/>
            <person name="Sanchez J.-C."/>
            <person name="Ravier F."/>
            <person name="Golaz O."/>
            <person name="Hughes G.J."/>
            <person name="Frutiger S."/>
            <person name="Paquet N."/>
            <person name="Wilkins M."/>
            <person name="Appel R.D."/>
            <person name="Bairoch A."/>
            <person name="Hochstrasser D.F."/>
        </authorList>
    </citation>
    <scope>PROTEIN SEQUENCE OF 2-12</scope>
    <source>
        <strain>K12 / W3110 / ATCC 27325 / DSM 5911</strain>
    </source>
</reference>
<reference key="17">
    <citation type="journal article" date="1984" name="Adv. Exp. Med. Biol.">
        <title>Proteins from the prokaryotic nucleoid: biochemical and 1H NMR studies on three bacterial histone-like proteins.</title>
        <authorList>
            <person name="Lammi M."/>
            <person name="Paci M."/>
            <person name="Pon C.L."/>
            <person name="Losso M.A."/>
            <person name="Miano A."/>
            <person name="Pawlik R.T."/>
            <person name="Gianfranceschi G.L."/>
            <person name="Gualerzi C.O."/>
        </authorList>
    </citation>
    <scope>PROTEIN SEQUENCE OF 2-8</scope>
    <scope>DNA-BINDING</scope>
    <scope>PROTEIN NAME</scope>
</reference>
<reference key="18">
    <citation type="journal article" date="1998" name="J. Mol. Biol.">
        <title>Protein identification with N and C-terminal sequence tags in proteome projects.</title>
        <authorList>
            <person name="Wilkins M.R."/>
            <person name="Gasteiger E."/>
            <person name="Tonella L."/>
            <person name="Ou K."/>
            <person name="Tyler M."/>
            <person name="Sanchez J.-C."/>
            <person name="Gooley A.A."/>
            <person name="Walsh B.J."/>
            <person name="Bairoch A."/>
            <person name="Appel R.D."/>
            <person name="Williams K.L."/>
            <person name="Hochstrasser D.F."/>
        </authorList>
    </citation>
    <scope>PROTEIN SEQUENCE OF 2-5</scope>
    <source>
        <strain>K12 / W3110 / ATCC 27325 / DSM 5911</strain>
    </source>
</reference>
<reference key="19">
    <citation type="journal article" date="1972" name="Proc. Natl. Acad. Sci. U.S.A.">
        <title>Two heat-resistant, low molecular weight proteins from Escherichia coli that stimulate DNA-directed RNA synthesis.</title>
        <authorList>
            <person name="Cukier-Kahn R."/>
            <person name="Jacquet M."/>
            <person name="Gros F."/>
        </authorList>
    </citation>
    <scope>FUNCTION</scope>
    <scope>SUBUNIT</scope>
    <scope>DNA-BINDING</scope>
    <source>
        <strain>MRE-600</strain>
    </source>
</reference>
<reference key="20">
    <citation type="journal article" date="1977" name="Nucleic Acids Res.">
        <title>Histone-like proteins in the purified Escherichia coli deoxyribonucleoprotein.</title>
        <authorList>
            <person name="Varshavsky A.J."/>
            <person name="Nedospasov S.A."/>
            <person name="Bakayev V.V."/>
            <person name="Bakayeva T.G."/>
            <person name="Georgiev G.P."/>
        </authorList>
    </citation>
    <scope>FUNCTION</scope>
    <scope>SUBCELLULAR LOCATION</scope>
    <scope>DNA-BINDING</scope>
    <source>
        <strain>802</strain>
    </source>
</reference>
<reference key="21">
    <citation type="journal article" date="1977" name="Eur. J. Biochem.">
        <title>Physico-chemical properties of a DNA binding protein: Escherichia coli factor H1.</title>
        <authorList>
            <person name="Spassky A."/>
            <person name="Buc H.C."/>
        </authorList>
    </citation>
    <scope>SUBUNIT</scope>
    <scope>DNA-BINDING</scope>
    <source>
        <strain>MRE-600</strain>
    </source>
</reference>
<reference key="22">
    <citation type="journal article" date="1984" name="Nucleic Acids Res.">
        <title>H1a, an E. coli DNA-binding protein which accumulates in stationary phase, strongly compacts DNA in vitro.</title>
        <authorList>
            <person name="Spassky A."/>
            <person name="Rimsky S."/>
            <person name="Garreau H."/>
            <person name="Buc H."/>
        </authorList>
    </citation>
    <scope>FUNCTION</scope>
    <scope>INDUCTION</scope>
    <scope>POST-TRANSLATIONAL MODIFICATION</scope>
    <scope>DNA-BINDING</scope>
    <source>
        <strain>MRE-600</strain>
    </source>
</reference>
<reference key="23">
    <citation type="journal article" date="1989" name="EMBO J.">
        <title>Synthetic curved DNA sequences can act as transcriptional activators in Escherichia coli.</title>
        <authorList>
            <person name="Bracco L."/>
            <person name="Kotlarz D."/>
            <person name="Kolb A."/>
            <person name="Diekmann S."/>
            <person name="Buc H."/>
        </authorList>
    </citation>
    <scope>FUNCTION</scope>
    <scope>BINDING OF CURVED DNA</scope>
</reference>
<reference key="24">
    <citation type="journal article" date="1990" name="Biochimie">
        <title>Mutations in bglY, the structural gene for the DNA-binding protein H1, affect expression of several Escherichia coli genes.</title>
        <authorList>
            <person name="Bertin P."/>
            <person name="Lejeune P."/>
            <person name="Laurent-Winter C."/>
            <person name="Danchin A."/>
        </authorList>
    </citation>
    <scope>FUNCTION</scope>
    <scope>DISRUPTION PHENOTYPE</scope>
    <source>
        <strain>K12</strain>
    </source>
</reference>
<reference key="25">
    <citation type="journal article" date="1993" name="Mol. Microbiol.">
        <title>Expression of the gene encoding the major bacterial nucleotide protein H-NS is subject to transcriptional auto-repression.</title>
        <authorList>
            <person name="Falconi M."/>
            <person name="Higgins P.N."/>
            <person name="Spurio R."/>
            <person name="Pon C.L."/>
            <person name="Gualerzi C.O."/>
        </authorList>
    </citation>
    <scope>FUNCTION</scope>
    <scope>INDUCTION</scope>
    <scope>DNA-BINDING</scope>
</reference>
<reference key="26">
    <citation type="journal article" date="1993" name="J. Bacteriol.">
        <title>Stress response of Escherichia coli to elevated hydrostatic pressure.</title>
        <authorList>
            <person name="Welch T.J."/>
            <person name="Farewell A."/>
            <person name="Neidhardt F.C."/>
            <person name="Bartlett D.H."/>
        </authorList>
    </citation>
    <scope>INDUCTION</scope>
    <source>
        <strain>K12 / W3110 / ATCC 27325 / DSM 5911</strain>
    </source>
</reference>
<reference key="27">
    <citation type="journal article" date="1996" name="J. Bacteriol.">
        <title>Probing the structure, function, and interactions of the Escherichia coli H-NS and StpA proteins by using dominant negative derivatives.</title>
        <authorList>
            <person name="Williams R.M."/>
            <person name="Rimsky S."/>
            <person name="Buc H."/>
        </authorList>
    </citation>
    <scope>FUNCTION</scope>
    <scope>SUBUNIT</scope>
    <scope>DOMAIN</scope>
    <scope>MUTAGENESIS OF LEU-26; 53-GLU--THR-55; 64-MET--GLN-137; TYR-97; THR-110; GLY-113; PRO-116; ILE-119; 122-ALA--GLN-137 AND PHE-133</scope>
</reference>
<reference key="28">
    <citation type="journal article" date="1996" name="EMBO J.">
        <title>Coordinated and differential expression of histone-like proteins in Escherichia coli: regulation and function of the H-NS analog StpA.</title>
        <authorList>
            <person name="Sonden B."/>
            <person name="Uhlin B.E."/>
        </authorList>
    </citation>
    <scope>FUNCTION</scope>
    <scope>INDUCTION</scope>
    <scope>DISRUPTION PHENOTYPE</scope>
    <source>
        <strain>K12</strain>
        <strain>K12 / MC1029</strain>
        <strain>K12 / MC4100 / ATCC 35695 / DSM 6574</strain>
    </source>
</reference>
<reference key="29">
    <citation type="journal article" date="1996" name="Mol. Microbiol.">
        <title>RbfA, a 30S ribosomal binding factor, is a cold-shock protein whose absence triggers the cold-shock response.</title>
        <authorList>
            <person name="Jones P.G."/>
            <person name="Inouye M."/>
        </authorList>
    </citation>
    <scope>INDUCTION BY COLD-SHOCK</scope>
    <source>
        <strain>CSH142</strain>
    </source>
</reference>
<reference key="30">
    <citation type="journal article" date="1996" name="J. Mol. Biol.">
        <title>Systematic mutational analysis revealing the functional domain organization of Escherichia coli nucleoid protein H-NS.</title>
        <authorList>
            <person name="Ueguchi C."/>
            <person name="Suzuki T."/>
            <person name="Yoshida T."/>
            <person name="Tanaka K."/>
            <person name="Mizuno T."/>
        </authorList>
    </citation>
    <scope>FUNCTION</scope>
    <scope>SUBUNIT</scope>
    <scope>DOMAIN</scope>
    <scope>DISRUPTION PHENOTYPE</scope>
    <scope>MUTAGENESIS OF ARG-12; ARG-15; ARG-54; ARG-90; ALA-91; 92-GLN--GLN-137; ARG-93; PRO-94; ALA-95; THR-110; GLY-111; ARG-114 AND THR-115</scope>
    <source>
        <strain>K12 / CSH26</strain>
    </source>
</reference>
<reference key="31">
    <citation type="journal article" date="1997" name="Electrophoresis">
        <title>Escherichia coli proteome analysis using the gene-protein database.</title>
        <authorList>
            <person name="VanBogelen R.A."/>
            <person name="Abshire K.Z."/>
            <person name="Moldover B."/>
            <person name="Olson E.R."/>
            <person name="Neidhardt F.C."/>
        </authorList>
    </citation>
    <scope>IDENTIFICATION BY 2D-GEL</scope>
</reference>
<reference key="32">
    <citation type="journal article" date="1997" name="J. Mol. Biol.">
        <title>Clarification of the dimerization domain and its functional significance for the Escherichia coli nucleoid protein H-NS.</title>
        <authorList>
            <person name="Ueguchi C."/>
            <person name="Seto C."/>
            <person name="Suzuki T."/>
            <person name="Mizuno T."/>
        </authorList>
    </citation>
    <scope>FUNCTION</scope>
    <scope>SUBUNIT</scope>
    <scope>DOMAIN</scope>
    <scope>MUTAGENESIS OF 2-SER--GLY-69; 2-SER--GLU-20; LEU-30; 64-MET--GLN-137 AND 92-GLN--GLN-137</scope>
</reference>
<reference key="33">
    <citation type="journal article" date="2000" name="Nucleic Acids Res.">
        <title>H-NS mediated compaction of DNA visualised by atomic force microscopy.</title>
        <authorList>
            <person name="Dame R.T."/>
            <person name="Wyman C."/>
            <person name="Goosen N."/>
        </authorList>
    </citation>
    <scope>FUNCTION IN DNA COMPACTION</scope>
    <scope>DNA-BINDING</scope>
</reference>
<reference key="34">
    <citation type="journal article" date="2000" name="J. Mol. Biol.">
        <title>Two novel flagellar components and H-NS are involved in the motor function of Escherichia coli.</title>
        <authorList>
            <person name="Ko M."/>
            <person name="Park C."/>
        </authorList>
    </citation>
    <scope>FUNCTION IN FLAGELLA BIOGENESIS AND MOTILITY</scope>
    <scope>DISRUPTION PHENOTYPE</scope>
    <source>
        <strain>K12</strain>
    </source>
</reference>
<reference key="35">
    <citation type="journal article" date="2002" name="J. Biol. Chem.">
        <title>Structural basis for H-NS-mediated trapping of RNA polymerase in the open initiation complex at the rrnB P1.</title>
        <authorList>
            <person name="Dame R.T."/>
            <person name="Wyman C."/>
            <person name="Wurm R."/>
            <person name="Wagner R."/>
            <person name="Goosen N."/>
        </authorList>
    </citation>
    <scope>POSSIBLE MECHANISM OF TRANSCRIPTIONAL REPRESSION</scope>
</reference>
<reference key="36">
    <citation type="journal article" date="2002" name="J. Bacteriol.">
        <title>Evidence for direct protein-protein interaction between members of the enterobacterial Hha/YmoA and H-NS families of proteins.</title>
        <authorList>
            <person name="Nieto J.M."/>
            <person name="Madrid C."/>
            <person name="Miquelay E."/>
            <person name="Parra J.L."/>
            <person name="Rodriguez S."/>
            <person name="Juarez A."/>
        </authorList>
    </citation>
    <scope>INTERACTION WITH HHA</scope>
    <scope>MASS SPECTROMETRY</scope>
    <scope>DISRUPTION PHENOTYPE</scope>
</reference>
<reference key="37">
    <citation type="journal article" date="2006" name="J. Mol. Biol.">
        <title>New roles for key residues in helices H1 and H2 of the Escherichia coli H-NS N-terminal domain: H-NS dimer stabilization and Hha binding.</title>
        <authorList>
            <person name="Garcia J."/>
            <person name="Madrid C."/>
            <person name="Juarez A."/>
            <person name="Pons M."/>
        </authorList>
    </citation>
    <scope>SUBUNIT</scope>
    <scope>DOMAIN</scope>
    <scope>MUTAGENESIS OF ARG-12 AND ARG-15</scope>
</reference>
<reference key="38">
    <citation type="journal article" date="2006" name="Nucleic Acids Res.">
        <title>Association of nucleoid proteins with coding and non-coding segments of the Escherichia coli genome.</title>
        <authorList>
            <person name="Grainger D.C."/>
            <person name="Hurd D."/>
            <person name="Goldberg M.D."/>
            <person name="Busby S.J."/>
        </authorList>
    </citation>
    <scope>FUNCTION</scope>
    <scope>REGULON</scope>
    <scope>DNA-BINDING</scope>
    <source>
        <strain>K12 / MG1655 / ATCC 47076</strain>
    </source>
</reference>
<reference key="39">
    <citation type="journal article" date="2006" name="DNA Res.">
        <title>Escherichia coli histone-like protein H-NS preferentially binds to horizontally acquired DNA in association with RNA polymerase.</title>
        <authorList>
            <person name="Oshima T."/>
            <person name="Ishikawa S."/>
            <person name="Kurokawa K."/>
            <person name="Aiba H."/>
            <person name="Ogasawara N."/>
        </authorList>
    </citation>
    <scope>FUNCTION IN SILENCING OF FOREIGN DNA</scope>
    <scope>REGULON</scope>
    <scope>DNA-BINDING</scope>
    <source>
        <strain>K12 / MG1655 / ATCC 47076</strain>
    </source>
</reference>
<reference key="40">
    <citation type="journal article" date="2006" name="Mol. Microbiol.">
        <title>Cyclic-di-GMP-mediated signalling within the sigma network of Escherichia coli.</title>
        <authorList>
            <person name="Weber H."/>
            <person name="Pesavento C."/>
            <person name="Possling A."/>
            <person name="Tischendorf G."/>
            <person name="Hengge R."/>
        </authorList>
    </citation>
    <scope>ROLE IN CURLI FIMBRIAE EXPRESSION</scope>
    <scope>DISRUPTION PHENOTYPE</scope>
    <source>
        <strain>K12 / MC4100</strain>
    </source>
</reference>
<reference key="41">
    <citation type="journal article" date="2007" name="Nat. Struct. Mol. Biol.">
        <title>H-NS cooperative binding to high-affinity sites in a regulatory element results in transcriptional silencing.</title>
        <authorList>
            <person name="Bouffartigues E."/>
            <person name="Buckle M."/>
            <person name="Badaut C."/>
            <person name="Travers A."/>
            <person name="Rimsky S."/>
        </authorList>
    </citation>
    <scope>FUNCTION</scope>
    <scope>DNA-BINDING</scope>
</reference>
<reference key="42">
    <citation type="journal article" date="2007" name="Nucleic Acids Res.">
        <title>High-affinity DNA binding sites for H-NS provide a molecular basis for selective silencing within proteobacterial genomes.</title>
        <authorList>
            <person name="Lang B."/>
            <person name="Blot N."/>
            <person name="Bouffartigues E."/>
            <person name="Buckle M."/>
            <person name="Geertz M."/>
            <person name="Gualerzi C.O."/>
            <person name="Mavathur R."/>
            <person name="Muskhelishvili G."/>
            <person name="Pon C.L."/>
            <person name="Rimsky S."/>
            <person name="Stella S."/>
            <person name="Babu M.M."/>
            <person name="Travers A."/>
        </authorList>
    </citation>
    <scope>FUNCTION</scope>
    <scope>MODEL OF ACTION</scope>
    <scope>DNA-BINDING</scope>
</reference>
<reference key="43">
    <citation type="journal article" date="2010" name="Mol. Microbiol.">
        <title>Identification and characterization of E. coli CRISPR-cas promoters and their silencing by H-NS.</title>
        <authorList>
            <person name="Pul U."/>
            <person name="Wurm R."/>
            <person name="Arslan Z."/>
            <person name="Geissen R."/>
            <person name="Hofmann N."/>
            <person name="Wagner R."/>
        </authorList>
    </citation>
    <scope>FUNCTION IN REPRESSING CRISPR EXPRESSION</scope>
    <source>
        <strain>K12</strain>
    </source>
</reference>
<reference key="44">
    <citation type="journal article" date="2010" name="Genes Dev.">
        <title>Novel role for a bacterial nucleoid protein in translation of mRNAs with suboptimal ribosome-binding sites.</title>
        <authorList>
            <person name="Park H.S."/>
            <person name="Ostberg Y."/>
            <person name="Johansson J."/>
            <person name="Wagner E.G."/>
            <person name="Uhlin B.E."/>
        </authorList>
    </citation>
    <scope>FUNCTION IN TRANSLATION ACTIVATION</scope>
    <scope>MRNA-BINDING</scope>
</reference>
<reference key="45">
    <citation type="journal article" date="2010" name="Mol. Microbiol.">
        <title>H-NS-mediated repression of CRISPR-based immunity in Escherichia coli K12 can be relieved by the transcription activator LeuO.</title>
        <authorList>
            <person name="Westra E.R."/>
            <person name="Pul U."/>
            <person name="Heidrich N."/>
            <person name="Jore M.M."/>
            <person name="Lundgren M."/>
            <person name="Stratmann T."/>
            <person name="Wurm R."/>
            <person name="Raine A."/>
            <person name="Mescher M."/>
            <person name="Van Heereveld L."/>
            <person name="Mastop M."/>
            <person name="Wagner E.G."/>
            <person name="Schnetz K."/>
            <person name="Van Der Oost J."/>
            <person name="Wagner R."/>
            <person name="Brouns S.J."/>
        </authorList>
    </citation>
    <scope>FUNCTION</scope>
    <scope>ANTAGONIZED BY LEUO</scope>
    <scope>ROLE IN CRISPR EXPRESSION</scope>
    <scope>DISRUPTION PHENOTYPE</scope>
    <source>
        <strain>K12</strain>
    </source>
</reference>
<reference key="46">
    <citation type="journal article" date="2011" name="FEBS Lett.">
        <title>Essential residues in the H-NS binding site of Hha, a co-regulator of horizontally acquired genes in Enterobacteria.</title>
        <authorList>
            <person name="de Alba C.F."/>
            <person name="Solorzano C."/>
            <person name="Paytubi S."/>
            <person name="Madrid C."/>
            <person name="Juarez A."/>
            <person name="Garcia J."/>
            <person name="Pons M."/>
        </authorList>
    </citation>
    <scope>INTERACTION WITH HHA AND CNU (YDGT)</scope>
    <scope>MUTAGENESIS OF ARG-12</scope>
    <source>
        <strain>K12 / MG1655 / ATCC 47076</strain>
    </source>
</reference>
<reference key="47">
    <citation type="journal article" date="2011" name="Science">
        <title>Chromosome organization by a nucleoid-associated protein in live bacteria.</title>
        <authorList>
            <person name="Wang W."/>
            <person name="Li G.W."/>
            <person name="Chen C."/>
            <person name="Xie X.S."/>
            <person name="Zhuang X."/>
        </authorList>
    </citation>
    <scope>FUNCTION IN CHROMOSOME ORGANIZATION</scope>
    <scope>SUBCELLULAR LOCATION</scope>
    <scope>DISRUPTION PHENOTYPE</scope>
    <scope>MUTAGENESIS OF LEU-30 AND PRO-116</scope>
    <source>
        <strain>K12 / BW25993</strain>
    </source>
</reference>
<reference key="48">
    <citation type="journal article" date="2013" name="DNA Res.">
        <title>Functions of the Hha and YdgT proteins in transcriptional silencing by the nucleoid proteins, H-NS and StpA, in Escherichia coli.</title>
        <authorList>
            <person name="Ueda T."/>
            <person name="Takahashi H."/>
            <person name="Uyar E."/>
            <person name="Ishikawa S."/>
            <person name="Ogasawara N."/>
            <person name="Oshima T."/>
        </authorList>
    </citation>
    <scope>FUNCTION</scope>
    <scope>REGULON</scope>
    <scope>DISRUPTION PHENOTYPE</scope>
    <source>
        <strain>K12 / W3110 / ATCC 27325 / DSM 5911</strain>
    </source>
</reference>
<reference key="49">
    <citation type="journal article" date="2014" name="Genes Dev.">
        <title>Widespread suppression of intragenic transcription initiation by H-NS.</title>
        <authorList>
            <person name="Singh S.S."/>
            <person name="Singh N."/>
            <person name="Bonocora R.P."/>
            <person name="Fitzgerald D.M."/>
            <person name="Wade J.T."/>
            <person name="Grainger D.C."/>
        </authorList>
    </citation>
    <scope>FUNCTION</scope>
    <scope>DNA-BINDING</scope>
    <source>
        <strain>K12 / MG1655 / ATCC 47076</strain>
    </source>
</reference>
<reference key="50">
    <citation type="journal article" date="2016" name="PLoS Genet.">
        <title>H-NS facilitates sequence diversification of horizontally transferred DNAs during their integration in host chromosomes.</title>
        <authorList>
            <person name="Higashi K."/>
            <person name="Tobe T."/>
            <person name="Kanai A."/>
            <person name="Uyar E."/>
            <person name="Ishikawa S."/>
            <person name="Suzuki Y."/>
            <person name="Ogasawara N."/>
            <person name="Kurokawa K."/>
            <person name="Oshima T."/>
        </authorList>
    </citation>
    <scope>FUNCTION</scope>
    <source>
        <strain>K12 / W3110 / ATCC 27325 / DSM 5911</strain>
    </source>
</reference>
<reference key="51">
    <citation type="journal article" date="2022" name="Nat. Chem. Biol.">
        <title>TmcA functions as a lysine 2-hydroxyisobutyryltransferase to regulate transcription.</title>
        <authorList>
            <person name="Dong H."/>
            <person name="Zhao Y."/>
            <person name="Bi C."/>
            <person name="Han Y."/>
            <person name="Zhang J."/>
            <person name="Bai X."/>
            <person name="Zhai G."/>
            <person name="Zhang H."/>
            <person name="Tian S."/>
            <person name="Hu D."/>
            <person name="Xu L."/>
            <person name="Zhang K."/>
        </authorList>
    </citation>
    <scope>HYDROXYBUTYRYLATION AT LYS-121</scope>
    <scope>ACTIVITY REGULATION</scope>
    <scope>MUTAGENESIS OF LYS-96 AND LYS-121</scope>
    <source>
        <strain>K12 / MG1655 / ATCC 47076</strain>
    </source>
</reference>
<reference key="52">
    <citation type="journal article" date="1995" name="FEBS Lett.">
        <title>Solution structure of the DNA binding domain of a nucleoid-associated protein, H-NS, from Escherichia coli.</title>
        <authorList>
            <person name="Shindo H."/>
            <person name="Iwaki T."/>
            <person name="Ieda R."/>
            <person name="Kurumizaka H."/>
            <person name="Ueguchi C."/>
            <person name="Mizuno T."/>
            <person name="Morikawa S."/>
            <person name="Nakamura H."/>
            <person name="Kuboniwa H."/>
        </authorList>
    </citation>
    <scope>STRUCTURE BY NMR OF 91-137</scope>
</reference>
<reference key="53">
    <citation type="journal article" date="2002" name="J. Mol. Biol.">
        <title>H-NS oligomerization domain structure reveals the mechanism for high order self-association of the intact protein.</title>
        <authorList>
            <person name="Esposito D."/>
            <person name="Petrovic A."/>
            <person name="Harris R."/>
            <person name="Ono S."/>
            <person name="Eccleston J.F."/>
            <person name="Mbabaali A."/>
            <person name="Haq I."/>
            <person name="Higgins C.F."/>
            <person name="Hinton J.C."/>
            <person name="Driscoll P.C."/>
            <person name="Ladbury J.E."/>
        </authorList>
    </citation>
    <scope>STRUCTURE BY NMR OF 2-58</scope>
    <scope>DOMAIN</scope>
    <scope>MUTAGENESIS OF LYS-6 AND GLN-17</scope>
    <scope>COILED COIL</scope>
</reference>
<reference key="54">
    <citation type="journal article" date="2003" name="Nat. Struct. Biol.">
        <title>The H-NS dimerization domain defines a new fold contributing to DNA recognition.</title>
        <authorList>
            <person name="Bloch V."/>
            <person name="Yang Y."/>
            <person name="Margeat E."/>
            <person name="Chavanieu A."/>
            <person name="Auge M.T."/>
            <person name="Robert B."/>
            <person name="Arold S."/>
            <person name="Rimsky S."/>
            <person name="Kochoyan M."/>
        </authorList>
    </citation>
    <scope>STRUCTURE BY NMR OF 2-47</scope>
    <scope>DOMAIN</scope>
    <scope>MUTAGENESIS OF 12-ARG--ARG-15</scope>
    <scope>COILED COIL</scope>
</reference>
<reference key="55">
    <citation type="journal article" date="2013" name="FEBS J.">
        <title>Protein oligomers studied by solid-state NMR--the case of the full-length nucleoid-associated protein histone-like nucleoid structuring protein.</title>
        <authorList>
            <person name="Renault M."/>
            <person name="Garcia J."/>
            <person name="Cordeiro T.N."/>
            <person name="Baldus M."/>
            <person name="Pons M."/>
        </authorList>
    </citation>
    <scope>STRUCTURE BY SOLID STATE NMR</scope>
    <scope>SUBUNIT</scope>
    <scope>DOMAIN</scope>
</reference>
<reference key="56">
    <citation type="journal article" date="2015" name="J. Biol. Chem.">
        <title>A three-protein charge zipper stabilizes a complex modulating bacterial gene silencing.</title>
        <authorList>
            <person name="Cordeiro T.N."/>
            <person name="Garcia J."/>
            <person name="Bernado P."/>
            <person name="Millet O."/>
            <person name="Pons M."/>
        </authorList>
    </citation>
    <scope>STRUCTURE BY NMR OF 1-46 IN COMPLEX WITH HHA</scope>
    <scope>SUBUNIT</scope>
    <scope>MUTAGENESIS OF LYS-32</scope>
</reference>
<reference key="57">
    <citation type="journal article" date="2015" name="Curr. Opin. Microbiol.">
        <title>H-NS and RNA polymerase: a love-hate relationship?</title>
        <authorList>
            <person name="Landick R."/>
            <person name="Wade J.T."/>
            <person name="Grainger D.C."/>
        </authorList>
    </citation>
    <scope>REVIEW</scope>
</reference>
<gene>
    <name evidence="52" type="primary">hns</name>
    <name evidence="51" type="synonym">bglY</name>
    <name type="synonym">cur</name>
    <name evidence="50" type="synonym">drdX</name>
    <name evidence="56" type="synonym">h-ns</name>
    <name type="synonym">hnsA</name>
    <name evidence="49" type="synonym">msyA</name>
    <name evidence="51" type="synonym">osmZ</name>
    <name type="synonym">pilG</name>
    <name type="synonym">topS</name>
    <name type="ordered locus">b1237</name>
    <name type="ordered locus">JW1225</name>
</gene>
<proteinExistence type="evidence at protein level"/>
<dbReference type="EMBL" id="X07688">
    <property type="protein sequence ID" value="CAA30530.1"/>
    <property type="molecule type" value="Genomic_DNA"/>
</dbReference>
<dbReference type="EMBL" id="X59940">
    <property type="protein sequence ID" value="CAA42565.1"/>
    <property type="molecule type" value="Genomic_DNA"/>
</dbReference>
<dbReference type="EMBL" id="X57231">
    <property type="protein sequence ID" value="CAA40507.1"/>
    <property type="molecule type" value="Genomic_DNA"/>
</dbReference>
<dbReference type="EMBL" id="X67326">
    <property type="protein sequence ID" value="CAA47740.1"/>
    <property type="molecule type" value="Genomic_DNA"/>
</dbReference>
<dbReference type="EMBL" id="Y00976">
    <property type="protein sequence ID" value="CAA68786.1"/>
    <property type="molecule type" value="Genomic_DNA"/>
</dbReference>
<dbReference type="EMBL" id="U00096">
    <property type="protein sequence ID" value="AAC74319.1"/>
    <property type="molecule type" value="Genomic_DNA"/>
</dbReference>
<dbReference type="EMBL" id="AP009048">
    <property type="protein sequence ID" value="BAA36117.1"/>
    <property type="molecule type" value="Genomic_DNA"/>
</dbReference>
<dbReference type="PIR" id="S00903">
    <property type="entry name" value="S00903"/>
</dbReference>
<dbReference type="RefSeq" id="NP_415753.1">
    <property type="nucleotide sequence ID" value="NC_000913.3"/>
</dbReference>
<dbReference type="RefSeq" id="WP_001287378.1">
    <property type="nucleotide sequence ID" value="NZ_STEB01000005.1"/>
</dbReference>
<dbReference type="PDB" id="1HNR">
    <property type="method" value="NMR"/>
    <property type="chains" value="A=91-137"/>
</dbReference>
<dbReference type="PDB" id="1HNS">
    <property type="method" value="NMR"/>
    <property type="chains" value="A=91-137"/>
</dbReference>
<dbReference type="PDB" id="1LR1">
    <property type="method" value="NMR"/>
    <property type="chains" value="A/B=2-58"/>
</dbReference>
<dbReference type="PDB" id="1NI8">
    <property type="method" value="NMR"/>
    <property type="chains" value="A/B=2-47"/>
</dbReference>
<dbReference type="PDB" id="2MW2">
    <property type="method" value="NMR"/>
    <property type="chains" value="B/C=1-47"/>
</dbReference>
<dbReference type="PDBsum" id="1HNR"/>
<dbReference type="PDBsum" id="1HNS"/>
<dbReference type="PDBsum" id="1LR1"/>
<dbReference type="PDBsum" id="1NI8"/>
<dbReference type="PDBsum" id="2MW2"/>
<dbReference type="BMRB" id="P0ACF8"/>
<dbReference type="SMR" id="P0ACF8"/>
<dbReference type="BioGRID" id="4263496">
    <property type="interactions" value="296"/>
</dbReference>
<dbReference type="BioGRID" id="850196">
    <property type="interactions" value="2"/>
</dbReference>
<dbReference type="ComplexPortal" id="CPX-1965">
    <property type="entry name" value="H-NS complex, dimeric"/>
</dbReference>
<dbReference type="ComplexPortal" id="CPX-1966">
    <property type="entry name" value="H-NS complex, tetrameric"/>
</dbReference>
<dbReference type="ComplexPortal" id="CPX-1979">
    <property type="entry name" value="H-NS-Hha transcription factor complex"/>
</dbReference>
<dbReference type="ComplexPortal" id="CPX-1980">
    <property type="entry name" value="H-NS-Cnu transcription factor complex"/>
</dbReference>
<dbReference type="DIP" id="DIP-35853N"/>
<dbReference type="FunCoup" id="P0ACF8">
    <property type="interactions" value="522"/>
</dbReference>
<dbReference type="IntAct" id="P0ACF8">
    <property type="interactions" value="54"/>
</dbReference>
<dbReference type="MINT" id="P0ACF8"/>
<dbReference type="STRING" id="511145.b1237"/>
<dbReference type="jPOST" id="P0ACF8"/>
<dbReference type="PaxDb" id="511145-b1237"/>
<dbReference type="EnsemblBacteria" id="AAC74319">
    <property type="protein sequence ID" value="AAC74319"/>
    <property type="gene ID" value="b1237"/>
</dbReference>
<dbReference type="GeneID" id="93775303"/>
<dbReference type="GeneID" id="945829"/>
<dbReference type="KEGG" id="ecj:JW1225"/>
<dbReference type="KEGG" id="eco:b1237"/>
<dbReference type="KEGG" id="ecoc:C3026_07275"/>
<dbReference type="PATRIC" id="fig|1411691.4.peg.1048"/>
<dbReference type="EchoBASE" id="EB0452"/>
<dbReference type="eggNOG" id="COG2916">
    <property type="taxonomic scope" value="Bacteria"/>
</dbReference>
<dbReference type="HOGENOM" id="CLU_117503_0_0_6"/>
<dbReference type="InParanoid" id="P0ACF8"/>
<dbReference type="OMA" id="NGVEKTW"/>
<dbReference type="OrthoDB" id="6088948at2"/>
<dbReference type="PhylomeDB" id="P0ACF8"/>
<dbReference type="BioCyc" id="EcoCyc:PD00288"/>
<dbReference type="EvolutionaryTrace" id="P0ACF8"/>
<dbReference type="PHI-base" id="PHI:6369"/>
<dbReference type="PRO" id="PR:P0ACF8"/>
<dbReference type="Proteomes" id="UP000000625">
    <property type="component" value="Chromosome"/>
</dbReference>
<dbReference type="CollecTF" id="EXPREG_00000830"/>
<dbReference type="GO" id="GO:0005829">
    <property type="term" value="C:cytosol"/>
    <property type="evidence" value="ECO:0000314"/>
    <property type="project" value="EcoCyc"/>
</dbReference>
<dbReference type="GO" id="GO:1990121">
    <property type="term" value="C:H-NS complex"/>
    <property type="evidence" value="ECO:0000353"/>
    <property type="project" value="ComplexPortal"/>
</dbReference>
<dbReference type="GO" id="GO:0036411">
    <property type="term" value="C:H-NS-Cnu complex"/>
    <property type="evidence" value="ECO:0000353"/>
    <property type="project" value="ComplexPortal"/>
</dbReference>
<dbReference type="GO" id="GO:0097495">
    <property type="term" value="C:H-NS-Hha complex"/>
    <property type="evidence" value="ECO:0000353"/>
    <property type="project" value="ComplexPortal"/>
</dbReference>
<dbReference type="GO" id="GO:0016020">
    <property type="term" value="C:membrane"/>
    <property type="evidence" value="ECO:0007005"/>
    <property type="project" value="UniProtKB"/>
</dbReference>
<dbReference type="GO" id="GO:0032993">
    <property type="term" value="C:protein-DNA complex"/>
    <property type="evidence" value="ECO:0000353"/>
    <property type="project" value="CollecTF"/>
</dbReference>
<dbReference type="GO" id="GO:0005667">
    <property type="term" value="C:transcription regulator complex"/>
    <property type="evidence" value="ECO:0000303"/>
    <property type="project" value="ComplexPortal"/>
</dbReference>
<dbReference type="GO" id="GO:0003681">
    <property type="term" value="F:bent DNA binding"/>
    <property type="evidence" value="ECO:0000314"/>
    <property type="project" value="EcoliWiki"/>
</dbReference>
<dbReference type="GO" id="GO:0001217">
    <property type="term" value="F:DNA-binding transcription repressor activity"/>
    <property type="evidence" value="ECO:0000353"/>
    <property type="project" value="CollecTF"/>
</dbReference>
<dbReference type="GO" id="GO:0042802">
    <property type="term" value="F:identical protein binding"/>
    <property type="evidence" value="ECO:0000353"/>
    <property type="project" value="IntAct"/>
</dbReference>
<dbReference type="GO" id="GO:0003680">
    <property type="term" value="F:minor groove of adenine-thymine-rich DNA binding"/>
    <property type="evidence" value="ECO:0000318"/>
    <property type="project" value="GO_Central"/>
</dbReference>
<dbReference type="GO" id="GO:0046983">
    <property type="term" value="F:protein dimerization activity"/>
    <property type="evidence" value="ECO:0007669"/>
    <property type="project" value="InterPro"/>
</dbReference>
<dbReference type="GO" id="GO:0003723">
    <property type="term" value="F:RNA binding"/>
    <property type="evidence" value="ECO:0007669"/>
    <property type="project" value="UniProtKB-KW"/>
</dbReference>
<dbReference type="GO" id="GO:0030527">
    <property type="term" value="F:structural constituent of chromatin"/>
    <property type="evidence" value="ECO:0007669"/>
    <property type="project" value="InterPro"/>
</dbReference>
<dbReference type="GO" id="GO:0000976">
    <property type="term" value="F:transcription cis-regulatory region binding"/>
    <property type="evidence" value="ECO:0000353"/>
    <property type="project" value="CollecTF"/>
</dbReference>
<dbReference type="GO" id="GO:0036386">
    <property type="term" value="P:bacterial nucleoid packaging"/>
    <property type="evidence" value="ECO:0000314"/>
    <property type="project" value="ComplexPortal"/>
</dbReference>
<dbReference type="GO" id="GO:0045892">
    <property type="term" value="P:negative regulation of DNA-templated transcription"/>
    <property type="evidence" value="ECO:0000314"/>
    <property type="project" value="ComplexPortal"/>
</dbReference>
<dbReference type="GO" id="GO:1900232">
    <property type="term" value="P:negative regulation of single-species biofilm formation on inanimate substrate"/>
    <property type="evidence" value="ECO:0000315"/>
    <property type="project" value="EcoCyc"/>
</dbReference>
<dbReference type="GO" id="GO:0006355">
    <property type="term" value="P:regulation of DNA-templated transcription"/>
    <property type="evidence" value="ECO:0000303"/>
    <property type="project" value="ComplexPortal"/>
</dbReference>
<dbReference type="GO" id="GO:0006417">
    <property type="term" value="P:regulation of translation"/>
    <property type="evidence" value="ECO:0007669"/>
    <property type="project" value="UniProtKB-KW"/>
</dbReference>
<dbReference type="DisProt" id="DP00776"/>
<dbReference type="FunFam" id="1.10.287.1050:FF:000001">
    <property type="entry name" value="DNA-binding protein"/>
    <property type="match status" value="1"/>
</dbReference>
<dbReference type="FunFam" id="4.10.430.10:FF:000001">
    <property type="entry name" value="DNA-binding protein"/>
    <property type="match status" value="1"/>
</dbReference>
<dbReference type="Gene3D" id="1.10.287.1050">
    <property type="entry name" value="H-NS histone-like proteins"/>
    <property type="match status" value="1"/>
</dbReference>
<dbReference type="Gene3D" id="4.10.430.10">
    <property type="entry name" value="Histone-like protein H-NS, C-terminal domain"/>
    <property type="match status" value="1"/>
</dbReference>
<dbReference type="InterPro" id="IPR054180">
    <property type="entry name" value="H-NS-like_N"/>
</dbReference>
<dbReference type="InterPro" id="IPR027444">
    <property type="entry name" value="H-NS_C_dom"/>
</dbReference>
<dbReference type="InterPro" id="IPR037150">
    <property type="entry name" value="H-NS_C_dom_sf"/>
</dbReference>
<dbReference type="InterPro" id="IPR001801">
    <property type="entry name" value="Histone_HNS"/>
</dbReference>
<dbReference type="InterPro" id="IPR027454">
    <property type="entry name" value="Histone_HNS_N"/>
</dbReference>
<dbReference type="NCBIfam" id="NF008193">
    <property type="entry name" value="PRK10947.1"/>
    <property type="match status" value="1"/>
</dbReference>
<dbReference type="PANTHER" id="PTHR38097">
    <property type="match status" value="1"/>
</dbReference>
<dbReference type="PANTHER" id="PTHR38097:SF1">
    <property type="entry name" value="DNA-BINDING PROTEIN H-NS"/>
    <property type="match status" value="1"/>
</dbReference>
<dbReference type="Pfam" id="PF00816">
    <property type="entry name" value="Histone_HNS"/>
    <property type="match status" value="1"/>
</dbReference>
<dbReference type="Pfam" id="PF22470">
    <property type="entry name" value="Histone_HNS_N"/>
    <property type="match status" value="1"/>
</dbReference>
<dbReference type="PIRSF" id="PIRSF002096">
    <property type="entry name" value="HnS"/>
    <property type="match status" value="1"/>
</dbReference>
<dbReference type="SMART" id="SM00528">
    <property type="entry name" value="HNS"/>
    <property type="match status" value="1"/>
</dbReference>
<dbReference type="SUPFAM" id="SSF81273">
    <property type="entry name" value="H-NS histone-like proteins"/>
    <property type="match status" value="2"/>
</dbReference>